<organism>
    <name type="scientific">Chaetomium globosum (strain ATCC 6205 / CBS 148.51 / DSM 1962 / NBRC 6347 / NRRL 1970)</name>
    <name type="common">Soil fungus</name>
    <dbReference type="NCBI Taxonomy" id="306901"/>
    <lineage>
        <taxon>Eukaryota</taxon>
        <taxon>Fungi</taxon>
        <taxon>Dikarya</taxon>
        <taxon>Ascomycota</taxon>
        <taxon>Pezizomycotina</taxon>
        <taxon>Sordariomycetes</taxon>
        <taxon>Sordariomycetidae</taxon>
        <taxon>Sordariales</taxon>
        <taxon>Chaetomiaceae</taxon>
        <taxon>Chaetomium</taxon>
    </lineage>
</organism>
<evidence type="ECO:0000250" key="1">
    <source>
        <dbReference type="UniProtKB" id="P04798"/>
    </source>
</evidence>
<evidence type="ECO:0000255" key="2"/>
<evidence type="ECO:0000255" key="3">
    <source>
        <dbReference type="PROSITE-ProRule" id="PRU00498"/>
    </source>
</evidence>
<evidence type="ECO:0000256" key="4">
    <source>
        <dbReference type="SAM" id="MobiDB-lite"/>
    </source>
</evidence>
<evidence type="ECO:0000269" key="5">
    <source>
    </source>
</evidence>
<evidence type="ECO:0000269" key="6">
    <source>
    </source>
</evidence>
<evidence type="ECO:0000303" key="7">
    <source>
    </source>
</evidence>
<evidence type="ECO:0000305" key="8"/>
<evidence type="ECO:0000305" key="9">
    <source>
    </source>
</evidence>
<evidence type="ECO:0000305" key="10">
    <source>
    </source>
</evidence>
<comment type="function">
    <text evidence="5 6 10">Cytochrome P450 monooxygenase; part of the gene cluster that mediates the biosynthesis of chaetoglobosin A which has a unique inhibitory activity against actin polymerization in mammalian cells (PubMed:23611317, PubMed:33622536). Chaetoglobosin A and its intermediates are involved in the morphological differentiation of C.globosum (PubMed:33622536). The first step of the pathway is the synthesis of prochaetoglobosin I via condensation of one acetyl-CoA, 8 malonyl-CoA, and a L-tryptophan molecule by the PKS-NRPS hybrid synthetase cheA, followed by reduction of backbone double bond to install desired geometry by the enoyl reductase cheB (PubMed:23611317). Further multiple oxidation steps performed by the cytochrome P450 monooxygenases cheE and cheG, as well as by the FAD-linked oxidoreductase cheF, lead to the formation of chaetoglobosin A (PubMed:23611317). Depending on the order of action of these reductases, distinct intermediates can be identified (PubMed:23611317). Within the pathway, the cytochrome P450 monooxygenase cheE catalyzes a stereospecific epoxidation on prochaetoglobosin I, cytoglobosin D, and chaetoglobosin J intermediates (PubMed:23611317). The FAD-linked oxidoreductase cheF performs dehydrogenation of the C-20 hydroxyl groups in the 20-dihyrochaetoglobosin A and cytoglobosin D intermediates (PubMed:23611317). Finally, the cytochrome P450 monooxygenase cheG can catalyze the stereospecific dihydroxylation of prochaetoglobosin I and prochaetoglobosin IV at C-19 and C-20, respectively (PubMed:23611317). The Diels-Alderase cheD may play a role in the post-PKS-NRPS biosynthetic steps catalyzing Diels-Alder cyclization (Probable).</text>
</comment>
<comment type="cofactor">
    <cofactor evidence="1">
        <name>heme</name>
        <dbReference type="ChEBI" id="CHEBI:30413"/>
    </cofactor>
</comment>
<comment type="pathway">
    <text evidence="5">Secondary metabolite biosynthesis.</text>
</comment>
<comment type="subcellular location">
    <subcellularLocation>
        <location evidence="2">Membrane</location>
        <topology evidence="2">Single-pass membrane protein</topology>
    </subcellularLocation>
</comment>
<comment type="induction">
    <text evidence="6">Expression is positively regulated by the cluster-specific transcription factor cheR that binds directly to an asymmetric direct repeat present in the promoter.</text>
</comment>
<comment type="disruption phenotype">
    <text evidence="5">Impairs the production of chaetoglobosin A but leads to the accumulation of prochaetoglobosin IV (PubMed:23611317).</text>
</comment>
<comment type="similarity">
    <text evidence="8">Belongs to the cytochrome P450 family.</text>
</comment>
<protein>
    <recommendedName>
        <fullName evidence="7">Cytochrome P450 monooxygenase cheG</fullName>
        <ecNumber evidence="9">1.-.-.-</ecNumber>
    </recommendedName>
    <alternativeName>
        <fullName evidence="7">Chaetoglobosin A biosynthesis cluster protein G</fullName>
    </alternativeName>
</protein>
<sequence>MFPALQKIVVSTNASPLVGRELASNSTWIWHVERLPMLLGIPTVILSLTPAVLRLLIKPLLFVPIRYSSFVLTRLITPVLKEDMLEFESTADKKSPAGPKAKGKLALTSWLLSRYPASLKDRMSQLIRDYLAITFESTPSTSGVLFYILIELAAAPELAEAVRRELREVAPNGELPSTHLNELKVMDSVMRESARVNPFSHLVLYRKLLRPLKLEGCPELPAGCFICVDAHHIDFSPQLWENPERFDGLRHYRARQKPENGNRFKFANLGSDAPGWGDGPQACPGRMFADNTIKIILAHILTHYDLELPPGQGKPEKGSMPNGSMSPDTKAKVLFRSRKL</sequence>
<keyword id="KW-0325">Glycoprotein</keyword>
<keyword id="KW-0349">Heme</keyword>
<keyword id="KW-0408">Iron</keyword>
<keyword id="KW-0472">Membrane</keyword>
<keyword id="KW-0479">Metal-binding</keyword>
<keyword id="KW-0503">Monooxygenase</keyword>
<keyword id="KW-0560">Oxidoreductase</keyword>
<keyword id="KW-1185">Reference proteome</keyword>
<keyword id="KW-0812">Transmembrane</keyword>
<keyword id="KW-1133">Transmembrane helix</keyword>
<reference key="1">
    <citation type="journal article" date="2015" name="Genome Announc.">
        <title>Draft genome sequence of the cellulolytic fungus Chaetomium globosum.</title>
        <authorList>
            <person name="Cuomo C.A."/>
            <person name="Untereiner W.A."/>
            <person name="Ma L.-J."/>
            <person name="Grabherr M."/>
            <person name="Birren B.W."/>
        </authorList>
    </citation>
    <scope>NUCLEOTIDE SEQUENCE [LARGE SCALE GENOMIC DNA]</scope>
    <source>
        <strain>ATCC 6205 / CBS 148.51 / DSM 1962 / NBRC 6347 / NRRL 1970</strain>
    </source>
</reference>
<reference key="2">
    <citation type="journal article" date="2013" name="J. Am. Chem. Soc.">
        <title>Combinatorial generation of complexity by redox enzymes in the chaetoglobosin A biosynthesis.</title>
        <authorList>
            <person name="Ishiuchi K."/>
            <person name="Nakazawa T."/>
            <person name="Yagishita F."/>
            <person name="Mino T."/>
            <person name="Noguchi H."/>
            <person name="Hotta K."/>
            <person name="Watanabe K."/>
        </authorList>
    </citation>
    <scope>FUNCTION</scope>
    <scope>DISRUPTION PHENOTYPE</scope>
    <scope>PATHWAY</scope>
</reference>
<reference key="3">
    <citation type="journal article" date="2021" name="Fungal Biol.">
        <title>Functional analysis of a chaetoglobosin A biosynthetic regulator in Chaetomium globosum.</title>
        <authorList>
            <person name="Cheng M."/>
            <person name="Zhao S."/>
            <person name="Liu H."/>
            <person name="Liu Y."/>
            <person name="Lin C."/>
            <person name="Song J."/>
            <person name="Thawai C."/>
            <person name="Charoensettasilp S."/>
            <person name="Yang Q."/>
        </authorList>
    </citation>
    <scope>FUNCTION</scope>
    <scope>INDUCTION</scope>
</reference>
<accession>Q2HEW1</accession>
<dbReference type="EC" id="1.-.-.-" evidence="9"/>
<dbReference type="EMBL" id="CH408029">
    <property type="protein sequence ID" value="EAQ93008.1"/>
    <property type="molecule type" value="Genomic_DNA"/>
</dbReference>
<dbReference type="RefSeq" id="XP_001220464.1">
    <property type="nucleotide sequence ID" value="XM_001220463.1"/>
</dbReference>
<dbReference type="SMR" id="Q2HEW1"/>
<dbReference type="STRING" id="306901.Q2HEW1"/>
<dbReference type="GlyCosmos" id="Q2HEW1">
    <property type="glycosylation" value="2 sites, No reported glycans"/>
</dbReference>
<dbReference type="GeneID" id="4387649"/>
<dbReference type="VEuPathDB" id="FungiDB:CHGG_01243"/>
<dbReference type="eggNOG" id="KOG0156">
    <property type="taxonomic scope" value="Eukaryota"/>
</dbReference>
<dbReference type="HOGENOM" id="CLU_022195_1_0_1"/>
<dbReference type="InParanoid" id="Q2HEW1"/>
<dbReference type="OMA" id="NRFKFAN"/>
<dbReference type="OrthoDB" id="1844152at2759"/>
<dbReference type="BioCyc" id="MetaCyc:MONOMER-19103"/>
<dbReference type="Proteomes" id="UP000001056">
    <property type="component" value="Unassembled WGS sequence"/>
</dbReference>
<dbReference type="GO" id="GO:0016020">
    <property type="term" value="C:membrane"/>
    <property type="evidence" value="ECO:0007669"/>
    <property type="project" value="UniProtKB-SubCell"/>
</dbReference>
<dbReference type="GO" id="GO:0020037">
    <property type="term" value="F:heme binding"/>
    <property type="evidence" value="ECO:0007669"/>
    <property type="project" value="InterPro"/>
</dbReference>
<dbReference type="GO" id="GO:0005506">
    <property type="term" value="F:iron ion binding"/>
    <property type="evidence" value="ECO:0007669"/>
    <property type="project" value="InterPro"/>
</dbReference>
<dbReference type="GO" id="GO:0004497">
    <property type="term" value="F:monooxygenase activity"/>
    <property type="evidence" value="ECO:0007669"/>
    <property type="project" value="UniProtKB-KW"/>
</dbReference>
<dbReference type="GO" id="GO:0016705">
    <property type="term" value="F:oxidoreductase activity, acting on paired donors, with incorporation or reduction of molecular oxygen"/>
    <property type="evidence" value="ECO:0007669"/>
    <property type="project" value="InterPro"/>
</dbReference>
<dbReference type="GO" id="GO:0019748">
    <property type="term" value="P:secondary metabolic process"/>
    <property type="evidence" value="ECO:0007669"/>
    <property type="project" value="UniProtKB-ARBA"/>
</dbReference>
<dbReference type="CDD" id="cd11041">
    <property type="entry name" value="CYP503A1-like"/>
    <property type="match status" value="1"/>
</dbReference>
<dbReference type="Gene3D" id="1.10.630.10">
    <property type="entry name" value="Cytochrome P450"/>
    <property type="match status" value="1"/>
</dbReference>
<dbReference type="InterPro" id="IPR001128">
    <property type="entry name" value="Cyt_P450"/>
</dbReference>
<dbReference type="InterPro" id="IPR002403">
    <property type="entry name" value="Cyt_P450_E_grp-IV"/>
</dbReference>
<dbReference type="InterPro" id="IPR036396">
    <property type="entry name" value="Cyt_P450_sf"/>
</dbReference>
<dbReference type="PANTHER" id="PTHR46206">
    <property type="entry name" value="CYTOCHROME P450"/>
    <property type="match status" value="1"/>
</dbReference>
<dbReference type="PANTHER" id="PTHR46206:SF6">
    <property type="entry name" value="CYTOCHROME P450 MONOOXYGENASE AN1598-RELATED"/>
    <property type="match status" value="1"/>
</dbReference>
<dbReference type="Pfam" id="PF00067">
    <property type="entry name" value="p450"/>
    <property type="match status" value="1"/>
</dbReference>
<dbReference type="PRINTS" id="PR00465">
    <property type="entry name" value="EP450IV"/>
</dbReference>
<dbReference type="SUPFAM" id="SSF48264">
    <property type="entry name" value="Cytochrome P450"/>
    <property type="match status" value="1"/>
</dbReference>
<gene>
    <name evidence="7" type="primary">cheG</name>
    <name type="ORF">CHGG_01243</name>
</gene>
<proteinExistence type="evidence at transcript level"/>
<feature type="chain" id="PRO_0000438245" description="Cytochrome P450 monooxygenase cheG">
    <location>
        <begin position="1"/>
        <end position="340"/>
    </location>
</feature>
<feature type="transmembrane region" description="Helical" evidence="2">
    <location>
        <begin position="37"/>
        <end position="57"/>
    </location>
</feature>
<feature type="region of interest" description="Disordered" evidence="4">
    <location>
        <begin position="308"/>
        <end position="340"/>
    </location>
</feature>
<feature type="binding site" description="axial binding residue" evidence="1">
    <location>
        <position position="283"/>
    </location>
    <ligand>
        <name>heme</name>
        <dbReference type="ChEBI" id="CHEBI:30413"/>
    </ligand>
    <ligandPart>
        <name>Fe</name>
        <dbReference type="ChEBI" id="CHEBI:18248"/>
    </ligandPart>
</feature>
<feature type="glycosylation site" description="N-linked (GlcNAc...) asparagine" evidence="3">
    <location>
        <position position="25"/>
    </location>
</feature>
<feature type="glycosylation site" description="N-linked (GlcNAc...) asparagine" evidence="3">
    <location>
        <position position="322"/>
    </location>
</feature>
<name>CHEG_CHAGB</name>